<keyword id="KW-0004">4Fe-4S</keyword>
<keyword id="KW-0408">Iron</keyword>
<keyword id="KW-0411">Iron-sulfur</keyword>
<keyword id="KW-0479">Metal-binding</keyword>
<keyword id="KW-0496">Mitochondrion</keyword>
<keyword id="KW-1185">Reference proteome</keyword>
<keyword id="KW-0949">S-adenosyl-L-methionine</keyword>
<keyword id="KW-0808">Transferase</keyword>
<keyword id="KW-0809">Transit peptide</keyword>
<sequence>MIALRVHNTRVVSRSLTVWTRPSPTLTLSRSLATESDALDKPKTRRRKTVFTDALNSGPSFDDFVSGKASEIMDPLEAARKDPNQRLPSWLKVPIPKGKSYHNVKKDVRELKLATVCEEAKCPNIGECWGGKKSEATATIMLLGDTCTRGCRFCSVKTNRNPAKPDPMEPENTAEAISRWGLGYVVLTTVDRDDLADGGAHHLAETVMKIKQKAPQILVEVLGGDFRGDLDMATVLAKSGLDVYAHNLETVEALTPFVRDRRATYRQSLSVLQRAKETKSSLVTKTSLMLGLGETDEQILQTLKDLREINCDVVTFGQYMRPTKRHMKVVEYVTPEKFDYWRDTALEMGFLYVASGPLVRSSYKAGEAFIENVIRKRRHNVGEAPRLAQEIQPKIFRE</sequence>
<organism>
    <name type="scientific">Scheffersomyces stipitis (strain ATCC 58785 / CBS 6054 / NBRC 10063 / NRRL Y-11545)</name>
    <name type="common">Yeast</name>
    <name type="synonym">Pichia stipitis</name>
    <dbReference type="NCBI Taxonomy" id="322104"/>
    <lineage>
        <taxon>Eukaryota</taxon>
        <taxon>Fungi</taxon>
        <taxon>Dikarya</taxon>
        <taxon>Ascomycota</taxon>
        <taxon>Saccharomycotina</taxon>
        <taxon>Pichiomycetes</taxon>
        <taxon>Debaryomycetaceae</taxon>
        <taxon>Scheffersomyces</taxon>
    </lineage>
</organism>
<gene>
    <name type="ORF">PICST_86231</name>
</gene>
<protein>
    <recommendedName>
        <fullName evidence="1">Lipoyl synthase, mitochondrial</fullName>
        <ecNumber evidence="1">2.8.1.8</ecNumber>
    </recommendedName>
    <alternativeName>
        <fullName evidence="1">Lipoate synthase</fullName>
        <shortName evidence="1">LS</shortName>
        <shortName evidence="1">Lip-syn</shortName>
    </alternativeName>
    <alternativeName>
        <fullName evidence="1">Lipoic acid synthase</fullName>
    </alternativeName>
</protein>
<comment type="function">
    <text evidence="1">Catalyzes the radical-mediated insertion of two sulfur atoms into the C-6 and C-8 positions of the octanoyl moiety bound to the lipoyl domains of lipoate-dependent enzymes, thereby converting the octanoylated domains into lipoylated derivatives.</text>
</comment>
<comment type="catalytic activity">
    <reaction evidence="1">
        <text>[[Fe-S] cluster scaffold protein carrying a second [4Fe-4S](2+) cluster] + N(6)-octanoyl-L-lysyl-[protein] + 2 oxidized [2Fe-2S]-[ferredoxin] + 2 S-adenosyl-L-methionine + 4 H(+) = [[Fe-S] cluster scaffold protein] + N(6)-[(R)-dihydrolipoyl]-L-lysyl-[protein] + 4 Fe(3+) + 2 hydrogen sulfide + 2 5'-deoxyadenosine + 2 L-methionine + 2 reduced [2Fe-2S]-[ferredoxin]</text>
        <dbReference type="Rhea" id="RHEA:16585"/>
        <dbReference type="Rhea" id="RHEA-COMP:9928"/>
        <dbReference type="Rhea" id="RHEA-COMP:10000"/>
        <dbReference type="Rhea" id="RHEA-COMP:10001"/>
        <dbReference type="Rhea" id="RHEA-COMP:10475"/>
        <dbReference type="Rhea" id="RHEA-COMP:14568"/>
        <dbReference type="Rhea" id="RHEA-COMP:14569"/>
        <dbReference type="ChEBI" id="CHEBI:15378"/>
        <dbReference type="ChEBI" id="CHEBI:17319"/>
        <dbReference type="ChEBI" id="CHEBI:29034"/>
        <dbReference type="ChEBI" id="CHEBI:29919"/>
        <dbReference type="ChEBI" id="CHEBI:33722"/>
        <dbReference type="ChEBI" id="CHEBI:33737"/>
        <dbReference type="ChEBI" id="CHEBI:33738"/>
        <dbReference type="ChEBI" id="CHEBI:57844"/>
        <dbReference type="ChEBI" id="CHEBI:59789"/>
        <dbReference type="ChEBI" id="CHEBI:78809"/>
        <dbReference type="ChEBI" id="CHEBI:83100"/>
        <dbReference type="EC" id="2.8.1.8"/>
    </reaction>
</comment>
<comment type="cofactor">
    <cofactor evidence="1">
        <name>[4Fe-4S] cluster</name>
        <dbReference type="ChEBI" id="CHEBI:49883"/>
    </cofactor>
    <text evidence="1">Binds 2 [4Fe-4S] clusters per subunit. One cluster is coordinated with 3 cysteines and an exchangeable S-adenosyl-L-methionine.</text>
</comment>
<comment type="pathway">
    <text evidence="1">Protein modification; protein lipoylation via endogenous pathway; protein N(6)-(lipoyl)lysine from octanoyl-[acyl-carrier-protein]: step 2/2.</text>
</comment>
<comment type="subcellular location">
    <subcellularLocation>
        <location evidence="1">Mitochondrion</location>
    </subcellularLocation>
</comment>
<comment type="similarity">
    <text evidence="1">Belongs to the radical SAM superfamily. Lipoyl synthase family.</text>
</comment>
<reference key="1">
    <citation type="journal article" date="2007" name="Nat. Biotechnol.">
        <title>Genome sequence of the lignocellulose-bioconverting and xylose-fermenting yeast Pichia stipitis.</title>
        <authorList>
            <person name="Jeffries T.W."/>
            <person name="Grigoriev I.V."/>
            <person name="Grimwood J."/>
            <person name="Laplaza J.M."/>
            <person name="Aerts A."/>
            <person name="Salamov A."/>
            <person name="Schmutz J."/>
            <person name="Lindquist E."/>
            <person name="Dehal P."/>
            <person name="Shapiro H."/>
            <person name="Jin Y.-S."/>
            <person name="Passoth V."/>
            <person name="Richardson P.M."/>
        </authorList>
    </citation>
    <scope>NUCLEOTIDE SEQUENCE [LARGE SCALE GENOMIC DNA]</scope>
    <source>
        <strain>ATCC 58785 / CBS 6054 / NBRC 10063 / NRRL Y-11545</strain>
    </source>
</reference>
<proteinExistence type="inferred from homology"/>
<name>LIPA_PICST</name>
<evidence type="ECO:0000255" key="1">
    <source>
        <dbReference type="HAMAP-Rule" id="MF_03123"/>
    </source>
</evidence>
<evidence type="ECO:0000255" key="2">
    <source>
        <dbReference type="PROSITE-ProRule" id="PRU01266"/>
    </source>
</evidence>
<accession>A3GGJ5</accession>
<feature type="transit peptide" description="Mitochondrion" evidence="1">
    <location>
        <begin position="1"/>
        <end position="32"/>
    </location>
</feature>
<feature type="chain" id="PRO_0000398283" description="Lipoyl synthase, mitochondrial">
    <location>
        <begin position="33"/>
        <end position="398"/>
    </location>
</feature>
<feature type="domain" description="Radical SAM core" evidence="2">
    <location>
        <begin position="132"/>
        <end position="351"/>
    </location>
</feature>
<feature type="binding site" evidence="1">
    <location>
        <position position="117"/>
    </location>
    <ligand>
        <name>[4Fe-4S] cluster</name>
        <dbReference type="ChEBI" id="CHEBI:49883"/>
        <label>1</label>
    </ligand>
</feature>
<feature type="binding site" evidence="1">
    <location>
        <position position="122"/>
    </location>
    <ligand>
        <name>[4Fe-4S] cluster</name>
        <dbReference type="ChEBI" id="CHEBI:49883"/>
        <label>1</label>
    </ligand>
</feature>
<feature type="binding site" evidence="1">
    <location>
        <position position="128"/>
    </location>
    <ligand>
        <name>[4Fe-4S] cluster</name>
        <dbReference type="ChEBI" id="CHEBI:49883"/>
        <label>1</label>
    </ligand>
</feature>
<feature type="binding site" evidence="1">
    <location>
        <position position="147"/>
    </location>
    <ligand>
        <name>[4Fe-4S] cluster</name>
        <dbReference type="ChEBI" id="CHEBI:49883"/>
        <label>2</label>
        <note>4Fe-4S-S-AdoMet</note>
    </ligand>
</feature>
<feature type="binding site" evidence="1">
    <location>
        <position position="151"/>
    </location>
    <ligand>
        <name>[4Fe-4S] cluster</name>
        <dbReference type="ChEBI" id="CHEBI:49883"/>
        <label>2</label>
        <note>4Fe-4S-S-AdoMet</note>
    </ligand>
</feature>
<feature type="binding site" evidence="1">
    <location>
        <position position="154"/>
    </location>
    <ligand>
        <name>[4Fe-4S] cluster</name>
        <dbReference type="ChEBI" id="CHEBI:49883"/>
        <label>2</label>
        <note>4Fe-4S-S-AdoMet</note>
    </ligand>
</feature>
<feature type="binding site" evidence="1">
    <location>
        <position position="362"/>
    </location>
    <ligand>
        <name>[4Fe-4S] cluster</name>
        <dbReference type="ChEBI" id="CHEBI:49883"/>
        <label>1</label>
    </ligand>
</feature>
<dbReference type="EC" id="2.8.1.8" evidence="1"/>
<dbReference type="EMBL" id="AAVQ01000001">
    <property type="protein sequence ID" value="EAZ63945.2"/>
    <property type="molecule type" value="Genomic_DNA"/>
</dbReference>
<dbReference type="SMR" id="A3GGJ5"/>
<dbReference type="FunCoup" id="A3GGJ5">
    <property type="interactions" value="608"/>
</dbReference>
<dbReference type="STRING" id="322104.A3GGJ5"/>
<dbReference type="KEGG" id="pic:PICST_86231"/>
<dbReference type="eggNOG" id="KOG2672">
    <property type="taxonomic scope" value="Eukaryota"/>
</dbReference>
<dbReference type="HOGENOM" id="CLU_033144_0_1_1"/>
<dbReference type="InParanoid" id="A3GGJ5"/>
<dbReference type="OMA" id="PYCDIDF"/>
<dbReference type="OrthoDB" id="3231at2759"/>
<dbReference type="UniPathway" id="UPA00538">
    <property type="reaction ID" value="UER00593"/>
</dbReference>
<dbReference type="Proteomes" id="UP000002258">
    <property type="component" value="Chromosome 1"/>
</dbReference>
<dbReference type="GO" id="GO:0005739">
    <property type="term" value="C:mitochondrion"/>
    <property type="evidence" value="ECO:0007669"/>
    <property type="project" value="UniProtKB-SubCell"/>
</dbReference>
<dbReference type="GO" id="GO:0051539">
    <property type="term" value="F:4 iron, 4 sulfur cluster binding"/>
    <property type="evidence" value="ECO:0007669"/>
    <property type="project" value="UniProtKB-UniRule"/>
</dbReference>
<dbReference type="GO" id="GO:0016992">
    <property type="term" value="F:lipoate synthase activity"/>
    <property type="evidence" value="ECO:0007669"/>
    <property type="project" value="UniProtKB-UniRule"/>
</dbReference>
<dbReference type="GO" id="GO:0046872">
    <property type="term" value="F:metal ion binding"/>
    <property type="evidence" value="ECO:0007669"/>
    <property type="project" value="UniProtKB-KW"/>
</dbReference>
<dbReference type="CDD" id="cd01335">
    <property type="entry name" value="Radical_SAM"/>
    <property type="match status" value="1"/>
</dbReference>
<dbReference type="FunFam" id="3.20.20.70:FF:000036">
    <property type="entry name" value="Lipoyl synthase, mitochondrial"/>
    <property type="match status" value="1"/>
</dbReference>
<dbReference type="Gene3D" id="3.20.20.70">
    <property type="entry name" value="Aldolase class I"/>
    <property type="match status" value="1"/>
</dbReference>
<dbReference type="HAMAP" id="MF_00206">
    <property type="entry name" value="Lipoyl_synth"/>
    <property type="match status" value="1"/>
</dbReference>
<dbReference type="InterPro" id="IPR013785">
    <property type="entry name" value="Aldolase_TIM"/>
</dbReference>
<dbReference type="InterPro" id="IPR006638">
    <property type="entry name" value="Elp3/MiaA/NifB-like_rSAM"/>
</dbReference>
<dbReference type="InterPro" id="IPR031691">
    <property type="entry name" value="LIAS_N"/>
</dbReference>
<dbReference type="InterPro" id="IPR003698">
    <property type="entry name" value="Lipoyl_synth"/>
</dbReference>
<dbReference type="InterPro" id="IPR007197">
    <property type="entry name" value="rSAM"/>
</dbReference>
<dbReference type="NCBIfam" id="TIGR00510">
    <property type="entry name" value="lipA"/>
    <property type="match status" value="1"/>
</dbReference>
<dbReference type="NCBIfam" id="NF004019">
    <property type="entry name" value="PRK05481.1"/>
    <property type="match status" value="1"/>
</dbReference>
<dbReference type="NCBIfam" id="NF009544">
    <property type="entry name" value="PRK12928.1"/>
    <property type="match status" value="1"/>
</dbReference>
<dbReference type="PANTHER" id="PTHR10949">
    <property type="entry name" value="LIPOYL SYNTHASE"/>
    <property type="match status" value="1"/>
</dbReference>
<dbReference type="PANTHER" id="PTHR10949:SF0">
    <property type="entry name" value="LIPOYL SYNTHASE, MITOCHONDRIAL"/>
    <property type="match status" value="1"/>
</dbReference>
<dbReference type="Pfam" id="PF16881">
    <property type="entry name" value="LIAS_N"/>
    <property type="match status" value="1"/>
</dbReference>
<dbReference type="Pfam" id="PF04055">
    <property type="entry name" value="Radical_SAM"/>
    <property type="match status" value="1"/>
</dbReference>
<dbReference type="SFLD" id="SFLDF00271">
    <property type="entry name" value="lipoyl_synthase"/>
    <property type="match status" value="1"/>
</dbReference>
<dbReference type="SFLD" id="SFLDS00029">
    <property type="entry name" value="Radical_SAM"/>
    <property type="match status" value="1"/>
</dbReference>
<dbReference type="SMART" id="SM00729">
    <property type="entry name" value="Elp3"/>
    <property type="match status" value="1"/>
</dbReference>
<dbReference type="SUPFAM" id="SSF102114">
    <property type="entry name" value="Radical SAM enzymes"/>
    <property type="match status" value="1"/>
</dbReference>
<dbReference type="PROSITE" id="PS51918">
    <property type="entry name" value="RADICAL_SAM"/>
    <property type="match status" value="1"/>
</dbReference>